<feature type="chain" id="PRO_0000266156" description="CTP synthase">
    <location>
        <begin position="1"/>
        <end position="583"/>
    </location>
</feature>
<feature type="domain" description="Glutamine amidotransferase type-1" evidence="1">
    <location>
        <begin position="303"/>
        <end position="551"/>
    </location>
</feature>
<feature type="region of interest" description="Amidoligase domain" evidence="1">
    <location>
        <begin position="1"/>
        <end position="278"/>
    </location>
</feature>
<feature type="region of interest" description="Disordered" evidence="2">
    <location>
        <begin position="560"/>
        <end position="583"/>
    </location>
</feature>
<feature type="active site" description="Nucleophile; for glutamine hydrolysis" evidence="1">
    <location>
        <position position="393"/>
    </location>
</feature>
<feature type="active site" evidence="1">
    <location>
        <position position="524"/>
    </location>
</feature>
<feature type="active site" evidence="1">
    <location>
        <position position="526"/>
    </location>
</feature>
<feature type="binding site" evidence="1">
    <location>
        <position position="20"/>
    </location>
    <ligand>
        <name>CTP</name>
        <dbReference type="ChEBI" id="CHEBI:37563"/>
        <note>allosteric inhibitor</note>
    </ligand>
</feature>
<feature type="binding site" evidence="1">
    <location>
        <position position="20"/>
    </location>
    <ligand>
        <name>UTP</name>
        <dbReference type="ChEBI" id="CHEBI:46398"/>
    </ligand>
</feature>
<feature type="binding site" evidence="1">
    <location>
        <begin position="21"/>
        <end position="26"/>
    </location>
    <ligand>
        <name>ATP</name>
        <dbReference type="ChEBI" id="CHEBI:30616"/>
    </ligand>
</feature>
<feature type="binding site" evidence="1">
    <location>
        <position position="78"/>
    </location>
    <ligand>
        <name>ATP</name>
        <dbReference type="ChEBI" id="CHEBI:30616"/>
    </ligand>
</feature>
<feature type="binding site" evidence="1">
    <location>
        <position position="78"/>
    </location>
    <ligand>
        <name>Mg(2+)</name>
        <dbReference type="ChEBI" id="CHEBI:18420"/>
    </ligand>
</feature>
<feature type="binding site" evidence="1">
    <location>
        <position position="152"/>
    </location>
    <ligand>
        <name>Mg(2+)</name>
        <dbReference type="ChEBI" id="CHEBI:18420"/>
    </ligand>
</feature>
<feature type="binding site" evidence="1">
    <location>
        <begin position="159"/>
        <end position="161"/>
    </location>
    <ligand>
        <name>CTP</name>
        <dbReference type="ChEBI" id="CHEBI:37563"/>
        <note>allosteric inhibitor</note>
    </ligand>
</feature>
<feature type="binding site" evidence="1">
    <location>
        <begin position="199"/>
        <end position="204"/>
    </location>
    <ligand>
        <name>CTP</name>
        <dbReference type="ChEBI" id="CHEBI:37563"/>
        <note>allosteric inhibitor</note>
    </ligand>
</feature>
<feature type="binding site" evidence="1">
    <location>
        <begin position="199"/>
        <end position="204"/>
    </location>
    <ligand>
        <name>UTP</name>
        <dbReference type="ChEBI" id="CHEBI:46398"/>
    </ligand>
</feature>
<feature type="binding site" evidence="1">
    <location>
        <position position="235"/>
    </location>
    <ligand>
        <name>CTP</name>
        <dbReference type="ChEBI" id="CHEBI:37563"/>
        <note>allosteric inhibitor</note>
    </ligand>
</feature>
<feature type="binding site" evidence="1">
    <location>
        <position position="235"/>
    </location>
    <ligand>
        <name>UTP</name>
        <dbReference type="ChEBI" id="CHEBI:46398"/>
    </ligand>
</feature>
<feature type="binding site" evidence="1">
    <location>
        <position position="366"/>
    </location>
    <ligand>
        <name>L-glutamine</name>
        <dbReference type="ChEBI" id="CHEBI:58359"/>
    </ligand>
</feature>
<feature type="binding site" evidence="1">
    <location>
        <begin position="394"/>
        <end position="397"/>
    </location>
    <ligand>
        <name>L-glutamine</name>
        <dbReference type="ChEBI" id="CHEBI:58359"/>
    </ligand>
</feature>
<feature type="binding site" evidence="1">
    <location>
        <position position="416"/>
    </location>
    <ligand>
        <name>L-glutamine</name>
        <dbReference type="ChEBI" id="CHEBI:58359"/>
    </ligand>
</feature>
<feature type="binding site" evidence="1">
    <location>
        <position position="477"/>
    </location>
    <ligand>
        <name>L-glutamine</name>
        <dbReference type="ChEBI" id="CHEBI:58359"/>
    </ligand>
</feature>
<dbReference type="EC" id="6.3.4.2" evidence="1"/>
<dbReference type="EMBL" id="AE016958">
    <property type="protein sequence ID" value="AAS03723.1"/>
    <property type="molecule type" value="Genomic_DNA"/>
</dbReference>
<dbReference type="RefSeq" id="WP_003876320.1">
    <property type="nucleotide sequence ID" value="NZ_CP106873.1"/>
</dbReference>
<dbReference type="SMR" id="Q740E5"/>
<dbReference type="STRING" id="262316.MAP_1406"/>
<dbReference type="KEGG" id="mpa:MAP_1406"/>
<dbReference type="eggNOG" id="COG0504">
    <property type="taxonomic scope" value="Bacteria"/>
</dbReference>
<dbReference type="HOGENOM" id="CLU_011675_5_0_11"/>
<dbReference type="UniPathway" id="UPA00159">
    <property type="reaction ID" value="UER00277"/>
</dbReference>
<dbReference type="Proteomes" id="UP000000580">
    <property type="component" value="Chromosome"/>
</dbReference>
<dbReference type="GO" id="GO:0005829">
    <property type="term" value="C:cytosol"/>
    <property type="evidence" value="ECO:0007669"/>
    <property type="project" value="TreeGrafter"/>
</dbReference>
<dbReference type="GO" id="GO:0005524">
    <property type="term" value="F:ATP binding"/>
    <property type="evidence" value="ECO:0007669"/>
    <property type="project" value="UniProtKB-KW"/>
</dbReference>
<dbReference type="GO" id="GO:0003883">
    <property type="term" value="F:CTP synthase activity"/>
    <property type="evidence" value="ECO:0007669"/>
    <property type="project" value="UniProtKB-UniRule"/>
</dbReference>
<dbReference type="GO" id="GO:0004359">
    <property type="term" value="F:glutaminase activity"/>
    <property type="evidence" value="ECO:0007669"/>
    <property type="project" value="RHEA"/>
</dbReference>
<dbReference type="GO" id="GO:0042802">
    <property type="term" value="F:identical protein binding"/>
    <property type="evidence" value="ECO:0007669"/>
    <property type="project" value="TreeGrafter"/>
</dbReference>
<dbReference type="GO" id="GO:0046872">
    <property type="term" value="F:metal ion binding"/>
    <property type="evidence" value="ECO:0007669"/>
    <property type="project" value="UniProtKB-KW"/>
</dbReference>
<dbReference type="GO" id="GO:0044210">
    <property type="term" value="P:'de novo' CTP biosynthetic process"/>
    <property type="evidence" value="ECO:0007669"/>
    <property type="project" value="UniProtKB-UniRule"/>
</dbReference>
<dbReference type="GO" id="GO:0019856">
    <property type="term" value="P:pyrimidine nucleobase biosynthetic process"/>
    <property type="evidence" value="ECO:0007669"/>
    <property type="project" value="TreeGrafter"/>
</dbReference>
<dbReference type="CDD" id="cd03113">
    <property type="entry name" value="CTPS_N"/>
    <property type="match status" value="1"/>
</dbReference>
<dbReference type="CDD" id="cd01746">
    <property type="entry name" value="GATase1_CTP_Synthase"/>
    <property type="match status" value="1"/>
</dbReference>
<dbReference type="FunFam" id="3.40.50.300:FF:000009">
    <property type="entry name" value="CTP synthase"/>
    <property type="match status" value="1"/>
</dbReference>
<dbReference type="FunFam" id="3.40.50.880:FF:000002">
    <property type="entry name" value="CTP synthase"/>
    <property type="match status" value="1"/>
</dbReference>
<dbReference type="Gene3D" id="3.40.50.880">
    <property type="match status" value="1"/>
</dbReference>
<dbReference type="Gene3D" id="3.40.50.300">
    <property type="entry name" value="P-loop containing nucleotide triphosphate hydrolases"/>
    <property type="match status" value="1"/>
</dbReference>
<dbReference type="HAMAP" id="MF_01227">
    <property type="entry name" value="PyrG"/>
    <property type="match status" value="1"/>
</dbReference>
<dbReference type="InterPro" id="IPR029062">
    <property type="entry name" value="Class_I_gatase-like"/>
</dbReference>
<dbReference type="InterPro" id="IPR004468">
    <property type="entry name" value="CTP_synthase"/>
</dbReference>
<dbReference type="InterPro" id="IPR017456">
    <property type="entry name" value="CTP_synthase_N"/>
</dbReference>
<dbReference type="InterPro" id="IPR017926">
    <property type="entry name" value="GATASE"/>
</dbReference>
<dbReference type="InterPro" id="IPR033828">
    <property type="entry name" value="GATase1_CTP_Synthase"/>
</dbReference>
<dbReference type="InterPro" id="IPR027417">
    <property type="entry name" value="P-loop_NTPase"/>
</dbReference>
<dbReference type="NCBIfam" id="NF003792">
    <property type="entry name" value="PRK05380.1"/>
    <property type="match status" value="1"/>
</dbReference>
<dbReference type="NCBIfam" id="TIGR00337">
    <property type="entry name" value="PyrG"/>
    <property type="match status" value="1"/>
</dbReference>
<dbReference type="PANTHER" id="PTHR11550">
    <property type="entry name" value="CTP SYNTHASE"/>
    <property type="match status" value="1"/>
</dbReference>
<dbReference type="PANTHER" id="PTHR11550:SF0">
    <property type="entry name" value="CTP SYNTHASE-RELATED"/>
    <property type="match status" value="1"/>
</dbReference>
<dbReference type="Pfam" id="PF06418">
    <property type="entry name" value="CTP_synth_N"/>
    <property type="match status" value="1"/>
</dbReference>
<dbReference type="Pfam" id="PF00117">
    <property type="entry name" value="GATase"/>
    <property type="match status" value="1"/>
</dbReference>
<dbReference type="SUPFAM" id="SSF52317">
    <property type="entry name" value="Class I glutamine amidotransferase-like"/>
    <property type="match status" value="1"/>
</dbReference>
<dbReference type="SUPFAM" id="SSF52540">
    <property type="entry name" value="P-loop containing nucleoside triphosphate hydrolases"/>
    <property type="match status" value="1"/>
</dbReference>
<dbReference type="PROSITE" id="PS51273">
    <property type="entry name" value="GATASE_TYPE_1"/>
    <property type="match status" value="1"/>
</dbReference>
<accession>Q740E5</accession>
<evidence type="ECO:0000255" key="1">
    <source>
        <dbReference type="HAMAP-Rule" id="MF_01227"/>
    </source>
</evidence>
<evidence type="ECO:0000256" key="2">
    <source>
        <dbReference type="SAM" id="MobiDB-lite"/>
    </source>
</evidence>
<name>PYRG_MYCPA</name>
<comment type="function">
    <text evidence="1">Catalyzes the ATP-dependent amination of UTP to CTP with either L-glutamine or ammonia as the source of nitrogen. Regulates intracellular CTP levels through interactions with the four ribonucleotide triphosphates.</text>
</comment>
<comment type="catalytic activity">
    <reaction evidence="1">
        <text>UTP + L-glutamine + ATP + H2O = CTP + L-glutamate + ADP + phosphate + 2 H(+)</text>
        <dbReference type="Rhea" id="RHEA:26426"/>
        <dbReference type="ChEBI" id="CHEBI:15377"/>
        <dbReference type="ChEBI" id="CHEBI:15378"/>
        <dbReference type="ChEBI" id="CHEBI:29985"/>
        <dbReference type="ChEBI" id="CHEBI:30616"/>
        <dbReference type="ChEBI" id="CHEBI:37563"/>
        <dbReference type="ChEBI" id="CHEBI:43474"/>
        <dbReference type="ChEBI" id="CHEBI:46398"/>
        <dbReference type="ChEBI" id="CHEBI:58359"/>
        <dbReference type="ChEBI" id="CHEBI:456216"/>
        <dbReference type="EC" id="6.3.4.2"/>
    </reaction>
</comment>
<comment type="catalytic activity">
    <reaction evidence="1">
        <text>L-glutamine + H2O = L-glutamate + NH4(+)</text>
        <dbReference type="Rhea" id="RHEA:15889"/>
        <dbReference type="ChEBI" id="CHEBI:15377"/>
        <dbReference type="ChEBI" id="CHEBI:28938"/>
        <dbReference type="ChEBI" id="CHEBI:29985"/>
        <dbReference type="ChEBI" id="CHEBI:58359"/>
    </reaction>
</comment>
<comment type="catalytic activity">
    <reaction evidence="1">
        <text>UTP + NH4(+) + ATP = CTP + ADP + phosphate + 2 H(+)</text>
        <dbReference type="Rhea" id="RHEA:16597"/>
        <dbReference type="ChEBI" id="CHEBI:15378"/>
        <dbReference type="ChEBI" id="CHEBI:28938"/>
        <dbReference type="ChEBI" id="CHEBI:30616"/>
        <dbReference type="ChEBI" id="CHEBI:37563"/>
        <dbReference type="ChEBI" id="CHEBI:43474"/>
        <dbReference type="ChEBI" id="CHEBI:46398"/>
        <dbReference type="ChEBI" id="CHEBI:456216"/>
    </reaction>
</comment>
<comment type="activity regulation">
    <text evidence="1">Allosterically activated by GTP, when glutamine is the substrate; GTP has no effect on the reaction when ammonia is the substrate. The allosteric effector GTP functions by stabilizing the protein conformation that binds the tetrahedral intermediate(s) formed during glutamine hydrolysis. Inhibited by the product CTP, via allosteric rather than competitive inhibition.</text>
</comment>
<comment type="pathway">
    <text evidence="1">Pyrimidine metabolism; CTP biosynthesis via de novo pathway; CTP from UDP: step 2/2.</text>
</comment>
<comment type="subunit">
    <text evidence="1">Homotetramer.</text>
</comment>
<comment type="miscellaneous">
    <text evidence="1">CTPSs have evolved a hybrid strategy for distinguishing between UTP and CTP. The overlapping regions of the product feedback inhibitory and substrate sites recognize a common feature in both compounds, the triphosphate moiety. To differentiate isosteric substrate and product pyrimidine rings, an additional pocket far from the expected kinase/ligase catalytic site, specifically recognizes the cytosine and ribose portions of the product inhibitor.</text>
</comment>
<comment type="similarity">
    <text evidence="1">Belongs to the CTP synthase family.</text>
</comment>
<keyword id="KW-0067">ATP-binding</keyword>
<keyword id="KW-0315">Glutamine amidotransferase</keyword>
<keyword id="KW-0436">Ligase</keyword>
<keyword id="KW-0460">Magnesium</keyword>
<keyword id="KW-0479">Metal-binding</keyword>
<keyword id="KW-0547">Nucleotide-binding</keyword>
<keyword id="KW-0665">Pyrimidine biosynthesis</keyword>
<keyword id="KW-1185">Reference proteome</keyword>
<protein>
    <recommendedName>
        <fullName evidence="1">CTP synthase</fullName>
        <ecNumber evidence="1">6.3.4.2</ecNumber>
    </recommendedName>
    <alternativeName>
        <fullName evidence="1">Cytidine 5'-triphosphate synthase</fullName>
    </alternativeName>
    <alternativeName>
        <fullName evidence="1">Cytidine triphosphate synthetase</fullName>
        <shortName evidence="1">CTP synthetase</shortName>
        <shortName evidence="1">CTPS</shortName>
    </alternativeName>
    <alternativeName>
        <fullName evidence="1">UTP--ammonia ligase</fullName>
    </alternativeName>
</protein>
<gene>
    <name evidence="1" type="primary">pyrG</name>
    <name type="ordered locus">MAP_1406</name>
</gene>
<sequence length="583" mass="63142">MRKHPQTATKHLFVSGGVASSLGKGLTASSLGQLLTARGLYVTMQKLDPYLNVDPGTMNPFQHGEVFVTEDGAETDLDVGHYERFLDRDLSGSANVTTGQVYSTVIAKERRGEYLGDTVQVIPHITDEIKGRILAMAQPDAQGNRPDVVITEIGGTVGDIESQPFLEAARQVRHDLGRENVFFLHVSLVPYLAPSGELKTKPTQHSVAALRSIGITPDALILRCDRDVPEALKNKIALMCDVDIDGVISTPDAPSIYDIPKVLHREELDAYVVRRLNLPFRDVDWTEWDDLLRRVHEPHETVRIALVGKYVELSDAYLSVTEALRAGGFFHHAKVEMVWVASDDCESASGAAAALGEVHGVLIPGGFGIRGIEGKIGAIHYARTRGLPVLGLCLGLQCIVIEAARAAGLAGANSAEFDPDTPDPVISTMADQVDIVAGAADLGGTMRLGAYPAVLEEDSIVARAYGTTQVSERHRHRYEVNNAYRDKIAESGLRFSGTSPDGHLVEFVEYPPDVHPFIVGTQAHPELKSRPTRPHPLFVAFVGAAMDYKAGELLPVEIPEQSSNGIQHRDSAARPIPEPAARG</sequence>
<organism>
    <name type="scientific">Mycolicibacterium paratuberculosis (strain ATCC BAA-968 / K-10)</name>
    <name type="common">Mycobacterium paratuberculosis</name>
    <dbReference type="NCBI Taxonomy" id="262316"/>
    <lineage>
        <taxon>Bacteria</taxon>
        <taxon>Bacillati</taxon>
        <taxon>Actinomycetota</taxon>
        <taxon>Actinomycetes</taxon>
        <taxon>Mycobacteriales</taxon>
        <taxon>Mycobacteriaceae</taxon>
        <taxon>Mycobacterium</taxon>
        <taxon>Mycobacterium avium complex (MAC)</taxon>
    </lineage>
</organism>
<proteinExistence type="inferred from homology"/>
<reference key="1">
    <citation type="journal article" date="2005" name="Proc. Natl. Acad. Sci. U.S.A.">
        <title>The complete genome sequence of Mycobacterium avium subspecies paratuberculosis.</title>
        <authorList>
            <person name="Li L."/>
            <person name="Bannantine J.P."/>
            <person name="Zhang Q."/>
            <person name="Amonsin A."/>
            <person name="May B.J."/>
            <person name="Alt D."/>
            <person name="Banerji N."/>
            <person name="Kanjilal S."/>
            <person name="Kapur V."/>
        </authorList>
    </citation>
    <scope>NUCLEOTIDE SEQUENCE [LARGE SCALE GENOMIC DNA]</scope>
    <source>
        <strain>ATCC BAA-968 / K-10</strain>
    </source>
</reference>